<dbReference type="EC" id="1.1.5.4" evidence="1"/>
<dbReference type="EMBL" id="BX950851">
    <property type="protein sequence ID" value="CAG75981.1"/>
    <property type="molecule type" value="Genomic_DNA"/>
</dbReference>
<dbReference type="RefSeq" id="WP_011094606.1">
    <property type="nucleotide sequence ID" value="NC_004547.2"/>
</dbReference>
<dbReference type="SMR" id="Q6D2L3"/>
<dbReference type="STRING" id="218491.ECA3082"/>
<dbReference type="GeneID" id="57209767"/>
<dbReference type="KEGG" id="eca:ECA3082"/>
<dbReference type="PATRIC" id="fig|218491.5.peg.3115"/>
<dbReference type="eggNOG" id="COG0579">
    <property type="taxonomic scope" value="Bacteria"/>
</dbReference>
<dbReference type="HOGENOM" id="CLU_028151_0_0_6"/>
<dbReference type="OrthoDB" id="9763983at2"/>
<dbReference type="UniPathway" id="UPA00223">
    <property type="reaction ID" value="UER01008"/>
</dbReference>
<dbReference type="Proteomes" id="UP000007966">
    <property type="component" value="Chromosome"/>
</dbReference>
<dbReference type="GO" id="GO:0047545">
    <property type="term" value="F:2-hydroxyglutarate dehydrogenase activity"/>
    <property type="evidence" value="ECO:0007669"/>
    <property type="project" value="TreeGrafter"/>
</dbReference>
<dbReference type="GO" id="GO:0008924">
    <property type="term" value="F:L-malate dehydrogenase (quinone) activity"/>
    <property type="evidence" value="ECO:0007669"/>
    <property type="project" value="UniProtKB-UniRule"/>
</dbReference>
<dbReference type="GO" id="GO:0006099">
    <property type="term" value="P:tricarboxylic acid cycle"/>
    <property type="evidence" value="ECO:0007669"/>
    <property type="project" value="UniProtKB-UniRule"/>
</dbReference>
<dbReference type="Gene3D" id="3.30.9.10">
    <property type="entry name" value="D-Amino Acid Oxidase, subunit A, domain 2"/>
    <property type="match status" value="1"/>
</dbReference>
<dbReference type="Gene3D" id="3.50.50.60">
    <property type="entry name" value="FAD/NAD(P)-binding domain"/>
    <property type="match status" value="1"/>
</dbReference>
<dbReference type="HAMAP" id="MF_00212">
    <property type="entry name" value="MQO"/>
    <property type="match status" value="1"/>
</dbReference>
<dbReference type="InterPro" id="IPR036188">
    <property type="entry name" value="FAD/NAD-bd_sf"/>
</dbReference>
<dbReference type="InterPro" id="IPR006231">
    <property type="entry name" value="MQO"/>
</dbReference>
<dbReference type="NCBIfam" id="TIGR01320">
    <property type="entry name" value="mal_quin_oxido"/>
    <property type="match status" value="1"/>
</dbReference>
<dbReference type="NCBIfam" id="NF003603">
    <property type="entry name" value="PRK05257.1-1"/>
    <property type="match status" value="1"/>
</dbReference>
<dbReference type="NCBIfam" id="NF003605">
    <property type="entry name" value="PRK05257.1-4"/>
    <property type="match status" value="1"/>
</dbReference>
<dbReference type="NCBIfam" id="NF003606">
    <property type="entry name" value="PRK05257.2-1"/>
    <property type="match status" value="1"/>
</dbReference>
<dbReference type="NCBIfam" id="NF003608">
    <property type="entry name" value="PRK05257.2-4"/>
    <property type="match status" value="1"/>
</dbReference>
<dbReference type="NCBIfam" id="NF003609">
    <property type="entry name" value="PRK05257.2-5"/>
    <property type="match status" value="1"/>
</dbReference>
<dbReference type="NCBIfam" id="NF003611">
    <property type="entry name" value="PRK05257.3-2"/>
    <property type="match status" value="1"/>
</dbReference>
<dbReference type="NCBIfam" id="NF009875">
    <property type="entry name" value="PRK13339.1"/>
    <property type="match status" value="1"/>
</dbReference>
<dbReference type="PANTHER" id="PTHR43104">
    <property type="entry name" value="L-2-HYDROXYGLUTARATE DEHYDROGENASE, MITOCHONDRIAL"/>
    <property type="match status" value="1"/>
</dbReference>
<dbReference type="PANTHER" id="PTHR43104:SF2">
    <property type="entry name" value="L-2-HYDROXYGLUTARATE DEHYDROGENASE, MITOCHONDRIAL"/>
    <property type="match status" value="1"/>
</dbReference>
<dbReference type="Pfam" id="PF06039">
    <property type="entry name" value="Mqo"/>
    <property type="match status" value="1"/>
</dbReference>
<dbReference type="SUPFAM" id="SSF51905">
    <property type="entry name" value="FAD/NAD(P)-binding domain"/>
    <property type="match status" value="1"/>
</dbReference>
<reference key="1">
    <citation type="journal article" date="2004" name="Proc. Natl. Acad. Sci. U.S.A.">
        <title>Genome sequence of the enterobacterial phytopathogen Erwinia carotovora subsp. atroseptica and characterization of virulence factors.</title>
        <authorList>
            <person name="Bell K.S."/>
            <person name="Sebaihia M."/>
            <person name="Pritchard L."/>
            <person name="Holden M.T.G."/>
            <person name="Hyman L.J."/>
            <person name="Holeva M.C."/>
            <person name="Thomson N.R."/>
            <person name="Bentley S.D."/>
            <person name="Churcher L.J.C."/>
            <person name="Mungall K."/>
            <person name="Atkin R."/>
            <person name="Bason N."/>
            <person name="Brooks K."/>
            <person name="Chillingworth T."/>
            <person name="Clark K."/>
            <person name="Doggett J."/>
            <person name="Fraser A."/>
            <person name="Hance Z."/>
            <person name="Hauser H."/>
            <person name="Jagels K."/>
            <person name="Moule S."/>
            <person name="Norbertczak H."/>
            <person name="Ormond D."/>
            <person name="Price C."/>
            <person name="Quail M.A."/>
            <person name="Sanders M."/>
            <person name="Walker D."/>
            <person name="Whitehead S."/>
            <person name="Salmond G.P.C."/>
            <person name="Birch P.R.J."/>
            <person name="Parkhill J."/>
            <person name="Toth I.K."/>
        </authorList>
    </citation>
    <scope>NUCLEOTIDE SEQUENCE [LARGE SCALE GENOMIC DNA]</scope>
    <source>
        <strain>SCRI 1043 / ATCC BAA-672</strain>
    </source>
</reference>
<evidence type="ECO:0000255" key="1">
    <source>
        <dbReference type="HAMAP-Rule" id="MF_00212"/>
    </source>
</evidence>
<organism>
    <name type="scientific">Pectobacterium atrosepticum (strain SCRI 1043 / ATCC BAA-672)</name>
    <name type="common">Erwinia carotovora subsp. atroseptica</name>
    <dbReference type="NCBI Taxonomy" id="218491"/>
    <lineage>
        <taxon>Bacteria</taxon>
        <taxon>Pseudomonadati</taxon>
        <taxon>Pseudomonadota</taxon>
        <taxon>Gammaproteobacteria</taxon>
        <taxon>Enterobacterales</taxon>
        <taxon>Pectobacteriaceae</taxon>
        <taxon>Pectobacterium</taxon>
    </lineage>
</organism>
<comment type="catalytic activity">
    <reaction evidence="1">
        <text>(S)-malate + a quinone = a quinol + oxaloacetate</text>
        <dbReference type="Rhea" id="RHEA:46012"/>
        <dbReference type="ChEBI" id="CHEBI:15589"/>
        <dbReference type="ChEBI" id="CHEBI:16452"/>
        <dbReference type="ChEBI" id="CHEBI:24646"/>
        <dbReference type="ChEBI" id="CHEBI:132124"/>
        <dbReference type="EC" id="1.1.5.4"/>
    </reaction>
</comment>
<comment type="cofactor">
    <cofactor evidence="1">
        <name>FAD</name>
        <dbReference type="ChEBI" id="CHEBI:57692"/>
    </cofactor>
</comment>
<comment type="pathway">
    <text evidence="1">Carbohydrate metabolism; tricarboxylic acid cycle; oxaloacetate from (S)-malate (quinone route): step 1/1.</text>
</comment>
<comment type="similarity">
    <text evidence="1">Belongs to the MQO family.</text>
</comment>
<gene>
    <name evidence="1" type="primary">mqo</name>
    <name type="ordered locus">ECA3082</name>
</gene>
<keyword id="KW-0274">FAD</keyword>
<keyword id="KW-0285">Flavoprotein</keyword>
<keyword id="KW-0560">Oxidoreductase</keyword>
<keyword id="KW-1185">Reference proteome</keyword>
<keyword id="KW-0816">Tricarboxylic acid cycle</keyword>
<sequence length="527" mass="58123">MKKLLAMFFCLSVVVSAPLAMAEDAKTTEKTTDVVLIGGGIMSSTLGVYLQELQPDWSIDMVERMDNVAEESSNGWNNAGTGHSAFMELNYTPDNPDGPINISKALEITEAFEISRQFWSYQVKNGVLNNPHAFINSVPHISFVWGDENTAFLKHRYDAMQHSTLYRGMEFSDDPNTIKEWVPLVMEGRDPAQKIAATRMPIGTDVNYGEITRQLVSAMKTKSNFALHLNSEVRDIKRNADNTWSVTYADLKNGEKESVIKAKFVFIGAGGAALKLLQKSGIPEADLYGGFPVGGEFLVTENPEIVKRHMAKVYGKASVGAPPMSVPHLDTRIFDGKPVLLFGPFATFSSKFLKNGSLWDLIGSVTFSNVMPMTHVGLDNFDLVKYLVSQVMMDDDDRFASLQEYFPNAKKEDWRLTVAGQRVQVIKKDDDKGGVLKLGTEIVSSQDGSIAALLGASPGASTAAPIMLSLLEKVFKDKVATPEWQSKLKEIVPSYGQKLDGNIEMTNKIRSYTSSTLGLDYIEVKPE</sequence>
<feature type="chain" id="PRO_1000023800" description="Probable malate:quinone oxidoreductase">
    <location>
        <begin position="1"/>
        <end position="527"/>
    </location>
</feature>
<proteinExistence type="inferred from homology"/>
<name>MQO_PECAS</name>
<accession>Q6D2L3</accession>
<protein>
    <recommendedName>
        <fullName evidence="1">Probable malate:quinone oxidoreductase</fullName>
        <ecNumber evidence="1">1.1.5.4</ecNumber>
    </recommendedName>
    <alternativeName>
        <fullName evidence="1">MQO</fullName>
    </alternativeName>
    <alternativeName>
        <fullName evidence="1">Malate dehydrogenase [quinone]</fullName>
    </alternativeName>
</protein>